<protein>
    <recommendedName>
        <fullName evidence="1">Probable DNA-directed RNA polymerase subunit delta</fullName>
    </recommendedName>
    <alternativeName>
        <fullName evidence="1">RNAP delta factor</fullName>
    </alternativeName>
</protein>
<reference key="1">
    <citation type="journal article" date="2006" name="Proc. Natl. Acad. Sci. U.S.A.">
        <title>Comparative genomics of the lactic acid bacteria.</title>
        <authorList>
            <person name="Makarova K.S."/>
            <person name="Slesarev A."/>
            <person name="Wolf Y.I."/>
            <person name="Sorokin A."/>
            <person name="Mirkin B."/>
            <person name="Koonin E.V."/>
            <person name="Pavlov A."/>
            <person name="Pavlova N."/>
            <person name="Karamychev V."/>
            <person name="Polouchine N."/>
            <person name="Shakhova V."/>
            <person name="Grigoriev I."/>
            <person name="Lou Y."/>
            <person name="Rohksar D."/>
            <person name="Lucas S."/>
            <person name="Huang K."/>
            <person name="Goodstein D.M."/>
            <person name="Hawkins T."/>
            <person name="Plengvidhya V."/>
            <person name="Welker D."/>
            <person name="Hughes J."/>
            <person name="Goh Y."/>
            <person name="Benson A."/>
            <person name="Baldwin K."/>
            <person name="Lee J.-H."/>
            <person name="Diaz-Muniz I."/>
            <person name="Dosti B."/>
            <person name="Smeianov V."/>
            <person name="Wechter W."/>
            <person name="Barabote R."/>
            <person name="Lorca G."/>
            <person name="Altermann E."/>
            <person name="Barrangou R."/>
            <person name="Ganesan B."/>
            <person name="Xie Y."/>
            <person name="Rawsthorne H."/>
            <person name="Tamir D."/>
            <person name="Parker C."/>
            <person name="Breidt F."/>
            <person name="Broadbent J.R."/>
            <person name="Hutkins R."/>
            <person name="O'Sullivan D."/>
            <person name="Steele J."/>
            <person name="Unlu G."/>
            <person name="Saier M.H. Jr."/>
            <person name="Klaenhammer T."/>
            <person name="Richardson P."/>
            <person name="Kozyavkin S."/>
            <person name="Weimer B.C."/>
            <person name="Mills D.A."/>
        </authorList>
    </citation>
    <scope>NUCLEOTIDE SEQUENCE [LARGE SCALE GENOMIC DNA]</scope>
    <source>
        <strain>ATCC 8293 / DSM 20343 / BCRC 11652 / CCM 1803 / JCM 6124 / NCDO 523 / NBRC 100496 / NCIMB 8023 / NCTC 12954 / NRRL B-1118 / 37Y</strain>
    </source>
</reference>
<accession>Q03YU3</accession>
<evidence type="ECO:0000255" key="1">
    <source>
        <dbReference type="HAMAP-Rule" id="MF_00357"/>
    </source>
</evidence>
<evidence type="ECO:0000255" key="2">
    <source>
        <dbReference type="PROSITE-ProRule" id="PRU01261"/>
    </source>
</evidence>
<evidence type="ECO:0000256" key="3">
    <source>
        <dbReference type="SAM" id="MobiDB-lite"/>
    </source>
</evidence>
<organism>
    <name type="scientific">Leuconostoc mesenteroides subsp. mesenteroides (strain ATCC 8293 / DSM 20343 / BCRC 11652 / CCM 1803 / JCM 6124 / NCDO 523 / NBRC 100496 / NCIMB 8023 / NCTC 12954 / NRRL B-1118 / 37Y)</name>
    <dbReference type="NCBI Taxonomy" id="203120"/>
    <lineage>
        <taxon>Bacteria</taxon>
        <taxon>Bacillati</taxon>
        <taxon>Bacillota</taxon>
        <taxon>Bacilli</taxon>
        <taxon>Lactobacillales</taxon>
        <taxon>Lactobacillaceae</taxon>
        <taxon>Leuconostoc</taxon>
    </lineage>
</organism>
<comment type="function">
    <text evidence="1">Participates in both the initiation and recycling phases of transcription. In the presence of the delta subunit, RNAP displays an increased specificity of transcription, a decreased affinity for nucleic acids, and an increased efficiency of RNA synthesis because of enhanced recycling.</text>
</comment>
<comment type="subunit">
    <text evidence="1">RNAP is composed of a core of 2 alpha, a beta and a beta' subunits. The core is associated with a delta subunit and one of several sigma factors.</text>
</comment>
<comment type="similarity">
    <text evidence="1">Belongs to the RpoE family.</text>
</comment>
<dbReference type="EMBL" id="CP000414">
    <property type="protein sequence ID" value="ABJ61629.1"/>
    <property type="molecule type" value="Genomic_DNA"/>
</dbReference>
<dbReference type="RefSeq" id="WP_011679347.1">
    <property type="nucleotide sequence ID" value="NC_008531.1"/>
</dbReference>
<dbReference type="SMR" id="Q03YU3"/>
<dbReference type="EnsemblBacteria" id="ABJ61629">
    <property type="protein sequence ID" value="ABJ61629"/>
    <property type="gene ID" value="LEUM_0513"/>
</dbReference>
<dbReference type="GeneID" id="29576035"/>
<dbReference type="KEGG" id="lme:LEUM_0513"/>
<dbReference type="eggNOG" id="COG3343">
    <property type="taxonomic scope" value="Bacteria"/>
</dbReference>
<dbReference type="HOGENOM" id="CLU_116648_0_0_9"/>
<dbReference type="Proteomes" id="UP000000362">
    <property type="component" value="Chromosome"/>
</dbReference>
<dbReference type="GO" id="GO:0000428">
    <property type="term" value="C:DNA-directed RNA polymerase complex"/>
    <property type="evidence" value="ECO:0007669"/>
    <property type="project" value="UniProtKB-KW"/>
</dbReference>
<dbReference type="GO" id="GO:0003899">
    <property type="term" value="F:DNA-directed RNA polymerase activity"/>
    <property type="evidence" value="ECO:0007669"/>
    <property type="project" value="UniProtKB-UniRule"/>
</dbReference>
<dbReference type="GO" id="GO:0006351">
    <property type="term" value="P:DNA-templated transcription"/>
    <property type="evidence" value="ECO:0007669"/>
    <property type="project" value="InterPro"/>
</dbReference>
<dbReference type="GO" id="GO:0006355">
    <property type="term" value="P:regulation of DNA-templated transcription"/>
    <property type="evidence" value="ECO:0007669"/>
    <property type="project" value="UniProtKB-UniRule"/>
</dbReference>
<dbReference type="Gene3D" id="1.10.10.1250">
    <property type="entry name" value="RNA polymerase, subunit delta, N-terminal domain"/>
    <property type="match status" value="1"/>
</dbReference>
<dbReference type="HAMAP" id="MF_00357">
    <property type="entry name" value="RNApol_bact_RpoE"/>
    <property type="match status" value="1"/>
</dbReference>
<dbReference type="InterPro" id="IPR007759">
    <property type="entry name" value="Asxl_HARE-HTH"/>
</dbReference>
<dbReference type="InterPro" id="IPR038087">
    <property type="entry name" value="RNAP_delta_N_dom_sf"/>
</dbReference>
<dbReference type="InterPro" id="IPR029757">
    <property type="entry name" value="RpoE"/>
</dbReference>
<dbReference type="NCBIfam" id="TIGR04567">
    <property type="entry name" value="RNAP_delt_lowGC"/>
    <property type="match status" value="1"/>
</dbReference>
<dbReference type="Pfam" id="PF05066">
    <property type="entry name" value="HARE-HTH"/>
    <property type="match status" value="1"/>
</dbReference>
<dbReference type="PROSITE" id="PS51913">
    <property type="entry name" value="HTH_HARE"/>
    <property type="match status" value="1"/>
</dbReference>
<sequence length="195" mass="21890">MSLTTLGNHPKEEFALVEIATAILTEHKEAMPFSSLVQEIQEFLEVDAETFKSRLSQFYTDLNTDGSFISLGNNEWALRAWYPVDAIDESIHELDDEEDAPKRKKSAKKKVNVFADNASDDDVIDYNDDDPEDEDFGTVTDDDTETDDEETEVEVESDDESNEIDLSDDESIDANMTELSGGDDLDDLSDGDQEK</sequence>
<name>RPOE_LEUMM</name>
<proteinExistence type="inferred from homology"/>
<keyword id="KW-0240">DNA-directed RNA polymerase</keyword>
<keyword id="KW-0548">Nucleotidyltransferase</keyword>
<keyword id="KW-1185">Reference proteome</keyword>
<keyword id="KW-0804">Transcription</keyword>
<keyword id="KW-0808">Transferase</keyword>
<feature type="chain" id="PRO_0000303132" description="Probable DNA-directed RNA polymerase subunit delta">
    <location>
        <begin position="1"/>
        <end position="195"/>
    </location>
</feature>
<feature type="domain" description="HTH HARE-type" evidence="2">
    <location>
        <begin position="14"/>
        <end position="81"/>
    </location>
</feature>
<feature type="region of interest" description="Disordered" evidence="3">
    <location>
        <begin position="120"/>
        <end position="195"/>
    </location>
</feature>
<feature type="compositionally biased region" description="Acidic residues" evidence="3">
    <location>
        <begin position="120"/>
        <end position="172"/>
    </location>
</feature>
<feature type="compositionally biased region" description="Acidic residues" evidence="3">
    <location>
        <begin position="181"/>
        <end position="195"/>
    </location>
</feature>
<gene>
    <name evidence="1" type="primary">rpoE</name>
    <name type="ordered locus">LEUM_0513</name>
</gene>